<keyword id="KW-0963">Cytoplasm</keyword>
<keyword id="KW-0342">GTP-binding</keyword>
<keyword id="KW-0378">Hydrolase</keyword>
<keyword id="KW-0547">Nucleotide-binding</keyword>
<keyword id="KW-1185">Reference proteome</keyword>
<keyword id="KW-0687">Ribonucleoprotein</keyword>
<keyword id="KW-0694">RNA-binding</keyword>
<keyword id="KW-0733">Signal recognition particle</keyword>
<feature type="chain" id="PRO_0000322245" description="Signal recognition particle 54 kDa protein">
    <location>
        <begin position="1"/>
        <end position="466"/>
    </location>
</feature>
<feature type="region of interest" description="Disordered" evidence="2">
    <location>
        <begin position="444"/>
        <end position="466"/>
    </location>
</feature>
<feature type="compositionally biased region" description="Gly residues" evidence="2">
    <location>
        <begin position="446"/>
        <end position="466"/>
    </location>
</feature>
<feature type="binding site" evidence="1">
    <location>
        <begin position="104"/>
        <end position="111"/>
    </location>
    <ligand>
        <name>GTP</name>
        <dbReference type="ChEBI" id="CHEBI:37565"/>
    </ligand>
</feature>
<feature type="binding site" evidence="1">
    <location>
        <begin position="184"/>
        <end position="188"/>
    </location>
    <ligand>
        <name>GTP</name>
        <dbReference type="ChEBI" id="CHEBI:37565"/>
    </ligand>
</feature>
<feature type="binding site" evidence="1">
    <location>
        <begin position="242"/>
        <end position="245"/>
    </location>
    <ligand>
        <name>GTP</name>
        <dbReference type="ChEBI" id="CHEBI:37565"/>
    </ligand>
</feature>
<accession>Q3IUP1</accession>
<proteinExistence type="inferred from homology"/>
<dbReference type="EC" id="3.6.5.4" evidence="1"/>
<dbReference type="EMBL" id="CR936257">
    <property type="protein sequence ID" value="CAI48139.1"/>
    <property type="molecule type" value="Genomic_DNA"/>
</dbReference>
<dbReference type="RefSeq" id="WP_011321778.1">
    <property type="nucleotide sequence ID" value="NC_007426.1"/>
</dbReference>
<dbReference type="SMR" id="Q3IUP1"/>
<dbReference type="STRING" id="348780.NP_0096A"/>
<dbReference type="EnsemblBacteria" id="CAI48139">
    <property type="protein sequence ID" value="CAI48139"/>
    <property type="gene ID" value="NP_0096A"/>
</dbReference>
<dbReference type="GeneID" id="3703217"/>
<dbReference type="KEGG" id="nph:NP_0096A"/>
<dbReference type="eggNOG" id="arCOG01228">
    <property type="taxonomic scope" value="Archaea"/>
</dbReference>
<dbReference type="HOGENOM" id="CLU_009301_6_0_2"/>
<dbReference type="OrthoDB" id="52849at2157"/>
<dbReference type="Proteomes" id="UP000002698">
    <property type="component" value="Chromosome"/>
</dbReference>
<dbReference type="GO" id="GO:0048500">
    <property type="term" value="C:signal recognition particle"/>
    <property type="evidence" value="ECO:0007669"/>
    <property type="project" value="UniProtKB-UniRule"/>
</dbReference>
<dbReference type="GO" id="GO:0008312">
    <property type="term" value="F:7S RNA binding"/>
    <property type="evidence" value="ECO:0007669"/>
    <property type="project" value="UniProtKB-UniRule"/>
</dbReference>
<dbReference type="GO" id="GO:0016887">
    <property type="term" value="F:ATP hydrolysis activity"/>
    <property type="evidence" value="ECO:0007669"/>
    <property type="project" value="InterPro"/>
</dbReference>
<dbReference type="GO" id="GO:0005525">
    <property type="term" value="F:GTP binding"/>
    <property type="evidence" value="ECO:0007669"/>
    <property type="project" value="UniProtKB-UniRule"/>
</dbReference>
<dbReference type="GO" id="GO:0003924">
    <property type="term" value="F:GTPase activity"/>
    <property type="evidence" value="ECO:0007669"/>
    <property type="project" value="UniProtKB-UniRule"/>
</dbReference>
<dbReference type="GO" id="GO:0006614">
    <property type="term" value="P:SRP-dependent cotranslational protein targeting to membrane"/>
    <property type="evidence" value="ECO:0007669"/>
    <property type="project" value="InterPro"/>
</dbReference>
<dbReference type="CDD" id="cd17875">
    <property type="entry name" value="SRP54_G"/>
    <property type="match status" value="1"/>
</dbReference>
<dbReference type="Gene3D" id="3.40.50.300">
    <property type="entry name" value="P-loop containing nucleotide triphosphate hydrolases"/>
    <property type="match status" value="1"/>
</dbReference>
<dbReference type="Gene3D" id="1.20.120.140">
    <property type="entry name" value="Signal recognition particle SRP54, nucleotide-binding domain"/>
    <property type="match status" value="1"/>
</dbReference>
<dbReference type="Gene3D" id="1.10.260.30">
    <property type="entry name" value="Signal recognition particle, SRP54 subunit, M-domain"/>
    <property type="match status" value="1"/>
</dbReference>
<dbReference type="HAMAP" id="MF_00306">
    <property type="entry name" value="SRP54"/>
    <property type="match status" value="1"/>
</dbReference>
<dbReference type="InterPro" id="IPR003593">
    <property type="entry name" value="AAA+_ATPase"/>
</dbReference>
<dbReference type="InterPro" id="IPR027417">
    <property type="entry name" value="P-loop_NTPase"/>
</dbReference>
<dbReference type="InterPro" id="IPR036891">
    <property type="entry name" value="Signal_recog_part_SRP54_M_sf"/>
</dbReference>
<dbReference type="InterPro" id="IPR013822">
    <property type="entry name" value="Signal_recog_particl_SRP54_hlx"/>
</dbReference>
<dbReference type="InterPro" id="IPR004125">
    <property type="entry name" value="Signal_recog_particle_SRP54_M"/>
</dbReference>
<dbReference type="InterPro" id="IPR036225">
    <property type="entry name" value="SRP/SRP_N"/>
</dbReference>
<dbReference type="InterPro" id="IPR022941">
    <property type="entry name" value="SRP54"/>
</dbReference>
<dbReference type="InterPro" id="IPR000897">
    <property type="entry name" value="SRP54_GTPase_dom"/>
</dbReference>
<dbReference type="InterPro" id="IPR042101">
    <property type="entry name" value="SRP54_N_sf"/>
</dbReference>
<dbReference type="PANTHER" id="PTHR11564">
    <property type="entry name" value="SIGNAL RECOGNITION PARTICLE 54K PROTEIN SRP54"/>
    <property type="match status" value="1"/>
</dbReference>
<dbReference type="PANTHER" id="PTHR11564:SF5">
    <property type="entry name" value="SIGNAL RECOGNITION PARTICLE SUBUNIT SRP54"/>
    <property type="match status" value="1"/>
</dbReference>
<dbReference type="Pfam" id="PF00448">
    <property type="entry name" value="SRP54"/>
    <property type="match status" value="1"/>
</dbReference>
<dbReference type="Pfam" id="PF02881">
    <property type="entry name" value="SRP54_N"/>
    <property type="match status" value="1"/>
</dbReference>
<dbReference type="Pfam" id="PF02978">
    <property type="entry name" value="SRP_SPB"/>
    <property type="match status" value="1"/>
</dbReference>
<dbReference type="SMART" id="SM00382">
    <property type="entry name" value="AAA"/>
    <property type="match status" value="1"/>
</dbReference>
<dbReference type="SMART" id="SM00962">
    <property type="entry name" value="SRP54"/>
    <property type="match status" value="1"/>
</dbReference>
<dbReference type="SMART" id="SM00963">
    <property type="entry name" value="SRP54_N"/>
    <property type="match status" value="1"/>
</dbReference>
<dbReference type="SUPFAM" id="SSF47364">
    <property type="entry name" value="Domain of the SRP/SRP receptor G-proteins"/>
    <property type="match status" value="1"/>
</dbReference>
<dbReference type="SUPFAM" id="SSF52540">
    <property type="entry name" value="P-loop containing nucleoside triphosphate hydrolases"/>
    <property type="match status" value="1"/>
</dbReference>
<dbReference type="SUPFAM" id="SSF47446">
    <property type="entry name" value="Signal peptide-binding domain"/>
    <property type="match status" value="1"/>
</dbReference>
<organism>
    <name type="scientific">Natronomonas pharaonis (strain ATCC 35678 / DSM 2160 / CIP 103997 / JCM 8858 / NBRC 14720 / NCIMB 2260 / Gabara)</name>
    <name type="common">Halobacterium pharaonis</name>
    <dbReference type="NCBI Taxonomy" id="348780"/>
    <lineage>
        <taxon>Archaea</taxon>
        <taxon>Methanobacteriati</taxon>
        <taxon>Methanobacteriota</taxon>
        <taxon>Stenosarchaea group</taxon>
        <taxon>Halobacteria</taxon>
        <taxon>Halobacteriales</taxon>
        <taxon>Haloarculaceae</taxon>
        <taxon>Natronomonas</taxon>
    </lineage>
</organism>
<sequence length="466" mass="50640">MVLDDLGSSLRGTLDKLQGKTTLSEDDVEEIVKEIQRSLLSADVDVDLVMDLSDSIRERALDEEPPAGTTARDHVLKIVYEEMVELVGESTALPLEEQTIVLAGLQGSGKTTTAAKMAWWFSKKGLRPAVIQTDTFRPGAYDQAKEMCERAEVDFYGNPDSDDPVEIAERGLEETADADVHIVDTAGRHALEEALIDELEAIESAVDPDRNLLVLDAAIGQGAKDQAERFHDAVGIDGVAITKLDGTAKGGGALAAVDQTDSSIAFLGTGEEVKDIERFEPSGFISRLLGMGDLKQLSERVERAMEETQAEEDWDPEDLMKGEFTLKDMRNQMNAMNKMGPLDQVMDMIPGLGGGIKDQLPDDAMDMTQERLRDFEVIMDSMSEAELENPRAIGQSQIERIARGSGTDEDTVRELLEQHKMMSRMMKQFQGMGDGDMQRMMKQMQQGGGGGGGGGGGLGGMGPFGD</sequence>
<protein>
    <recommendedName>
        <fullName evidence="1">Signal recognition particle 54 kDa protein</fullName>
        <shortName evidence="1">SRP54</shortName>
        <ecNumber evidence="1">3.6.5.4</ecNumber>
    </recommendedName>
</protein>
<comment type="function">
    <text evidence="1">Involved in targeting and insertion of nascent membrane proteins into the cytoplasmic membrane. Binds to the hydrophobic signal sequence of the ribosome-nascent chain (RNC) as it emerges from the ribosomes. The SRP-RNC complex is then targeted to the cytoplasmic membrane where it interacts with the SRP receptor FtsY.</text>
</comment>
<comment type="catalytic activity">
    <reaction evidence="1">
        <text>GTP + H2O = GDP + phosphate + H(+)</text>
        <dbReference type="Rhea" id="RHEA:19669"/>
        <dbReference type="ChEBI" id="CHEBI:15377"/>
        <dbReference type="ChEBI" id="CHEBI:15378"/>
        <dbReference type="ChEBI" id="CHEBI:37565"/>
        <dbReference type="ChEBI" id="CHEBI:43474"/>
        <dbReference type="ChEBI" id="CHEBI:58189"/>
        <dbReference type="EC" id="3.6.5.4"/>
    </reaction>
</comment>
<comment type="subunit">
    <text evidence="1">Part of the signal recognition particle protein translocation system, which is composed of SRP and FtsY. Archaeal SRP consists of a 7S RNA molecule of 300 nucleotides and two protein subunits: SRP54 and SRP19.</text>
</comment>
<comment type="subcellular location">
    <subcellularLocation>
        <location evidence="1">Cytoplasm</location>
    </subcellularLocation>
    <text evidence="1">The SRP-RNC complex is targeted to the cytoplasmic membrane.</text>
</comment>
<comment type="domain">
    <text evidence="1">Composed of three domains: the N-terminal N domain, which is responsible for interactions with the ribosome, the central G domain, which binds GTP, and the C-terminal M domain, which binds the RNA and the signal sequence of the RNC.</text>
</comment>
<comment type="similarity">
    <text evidence="1">Belongs to the GTP-binding SRP family. SRP54 subfamily.</text>
</comment>
<evidence type="ECO:0000255" key="1">
    <source>
        <dbReference type="HAMAP-Rule" id="MF_00306"/>
    </source>
</evidence>
<evidence type="ECO:0000256" key="2">
    <source>
        <dbReference type="SAM" id="MobiDB-lite"/>
    </source>
</evidence>
<reference key="1">
    <citation type="journal article" date="2005" name="Genome Res.">
        <title>Living with two extremes: conclusions from the genome sequence of Natronomonas pharaonis.</title>
        <authorList>
            <person name="Falb M."/>
            <person name="Pfeiffer F."/>
            <person name="Palm P."/>
            <person name="Rodewald K."/>
            <person name="Hickmann V."/>
            <person name="Tittor J."/>
            <person name="Oesterhelt D."/>
        </authorList>
    </citation>
    <scope>NUCLEOTIDE SEQUENCE [LARGE SCALE GENOMIC DNA]</scope>
    <source>
        <strain>ATCC 35678 / DSM 2160 / CIP 103997 / JCM 8858 / NBRC 14720 / NCIMB 2260 / Gabara</strain>
    </source>
</reference>
<gene>
    <name evidence="1" type="primary">srp54</name>
    <name type="ordered locus">NP_0096A</name>
</gene>
<name>SRP54_NATPD</name>